<proteinExistence type="inferred from homology"/>
<accession>Q0HKZ7</accession>
<dbReference type="EMBL" id="CP000446">
    <property type="protein sequence ID" value="ABI38270.1"/>
    <property type="molecule type" value="Genomic_DNA"/>
</dbReference>
<dbReference type="SMR" id="Q0HKZ7"/>
<dbReference type="KEGG" id="she:Shewmr4_1190"/>
<dbReference type="HOGENOM" id="CLU_130694_5_0_6"/>
<dbReference type="GO" id="GO:0005737">
    <property type="term" value="C:cytoplasm"/>
    <property type="evidence" value="ECO:0007669"/>
    <property type="project" value="TreeGrafter"/>
</dbReference>
<dbReference type="Gene3D" id="3.30.1200.10">
    <property type="entry name" value="YggU-like"/>
    <property type="match status" value="1"/>
</dbReference>
<dbReference type="HAMAP" id="MF_00634">
    <property type="entry name" value="UPF0235"/>
    <property type="match status" value="1"/>
</dbReference>
<dbReference type="InterPro" id="IPR003746">
    <property type="entry name" value="DUF167"/>
</dbReference>
<dbReference type="InterPro" id="IPR036591">
    <property type="entry name" value="YggU-like_sf"/>
</dbReference>
<dbReference type="NCBIfam" id="TIGR00251">
    <property type="entry name" value="DUF167 family protein"/>
    <property type="match status" value="1"/>
</dbReference>
<dbReference type="NCBIfam" id="NF003466">
    <property type="entry name" value="PRK05090.1"/>
    <property type="match status" value="1"/>
</dbReference>
<dbReference type="PANTHER" id="PTHR13420">
    <property type="entry name" value="UPF0235 PROTEIN C15ORF40"/>
    <property type="match status" value="1"/>
</dbReference>
<dbReference type="PANTHER" id="PTHR13420:SF7">
    <property type="entry name" value="UPF0235 PROTEIN C15ORF40"/>
    <property type="match status" value="1"/>
</dbReference>
<dbReference type="Pfam" id="PF02594">
    <property type="entry name" value="DUF167"/>
    <property type="match status" value="1"/>
</dbReference>
<dbReference type="SMART" id="SM01152">
    <property type="entry name" value="DUF167"/>
    <property type="match status" value="1"/>
</dbReference>
<dbReference type="SUPFAM" id="SSF69786">
    <property type="entry name" value="YggU-like"/>
    <property type="match status" value="1"/>
</dbReference>
<name>Y1190_SHESM</name>
<organism>
    <name type="scientific">Shewanella sp. (strain MR-4)</name>
    <dbReference type="NCBI Taxonomy" id="60480"/>
    <lineage>
        <taxon>Bacteria</taxon>
        <taxon>Pseudomonadati</taxon>
        <taxon>Pseudomonadota</taxon>
        <taxon>Gammaproteobacteria</taxon>
        <taxon>Alteromonadales</taxon>
        <taxon>Shewanellaceae</taxon>
        <taxon>Shewanella</taxon>
    </lineage>
</organism>
<reference key="1">
    <citation type="submission" date="2006-08" db="EMBL/GenBank/DDBJ databases">
        <title>Complete sequence of Shewanella sp. MR-4.</title>
        <authorList>
            <consortium name="US DOE Joint Genome Institute"/>
            <person name="Copeland A."/>
            <person name="Lucas S."/>
            <person name="Lapidus A."/>
            <person name="Barry K."/>
            <person name="Detter J.C."/>
            <person name="Glavina del Rio T."/>
            <person name="Hammon N."/>
            <person name="Israni S."/>
            <person name="Dalin E."/>
            <person name="Tice H."/>
            <person name="Pitluck S."/>
            <person name="Kiss H."/>
            <person name="Brettin T."/>
            <person name="Bruce D."/>
            <person name="Han C."/>
            <person name="Tapia R."/>
            <person name="Gilna P."/>
            <person name="Schmutz J."/>
            <person name="Larimer F."/>
            <person name="Land M."/>
            <person name="Hauser L."/>
            <person name="Kyrpides N."/>
            <person name="Mikhailova N."/>
            <person name="Nealson K."/>
            <person name="Konstantinidis K."/>
            <person name="Klappenbach J."/>
            <person name="Tiedje J."/>
            <person name="Richardson P."/>
        </authorList>
    </citation>
    <scope>NUCLEOTIDE SEQUENCE [LARGE SCALE GENOMIC DNA]</scope>
    <source>
        <strain>MR-4</strain>
    </source>
</reference>
<gene>
    <name type="ordered locus">Shewmr4_1190</name>
</gene>
<evidence type="ECO:0000255" key="1">
    <source>
        <dbReference type="HAMAP-Rule" id="MF_00634"/>
    </source>
</evidence>
<sequence length="96" mass="10429">MSAVIMQQGDLLLNLYIQPKASRDQIVGLHGDELKVAITAPPIDGKANAHLSKYLAKAFKVPKSDVHILKGELGRHKQVRISAPKNVPAEIATLLE</sequence>
<feature type="chain" id="PRO_1000056792" description="UPF0235 protein Shewmr4_1190">
    <location>
        <begin position="1"/>
        <end position="96"/>
    </location>
</feature>
<protein>
    <recommendedName>
        <fullName evidence="1">UPF0235 protein Shewmr4_1190</fullName>
    </recommendedName>
</protein>
<comment type="similarity">
    <text evidence="1">Belongs to the UPF0235 family.</text>
</comment>